<reference key="1">
    <citation type="journal article" date="2014" name="Stand. Genomic Sci.">
        <title>Complete genome sequence of Anabaena variabilis ATCC 29413.</title>
        <authorList>
            <person name="Thiel T."/>
            <person name="Pratte B.S."/>
            <person name="Zhong J."/>
            <person name="Goodwin L."/>
            <person name="Copeland A."/>
            <person name="Lucas S."/>
            <person name="Han C."/>
            <person name="Pitluck S."/>
            <person name="Land M.L."/>
            <person name="Kyrpides N.C."/>
            <person name="Woyke T."/>
        </authorList>
    </citation>
    <scope>NUCLEOTIDE SEQUENCE [LARGE SCALE GENOMIC DNA]</scope>
    <source>
        <strain>ATCC 29413 / PCC 7937</strain>
    </source>
</reference>
<proteinExistence type="inferred from homology"/>
<gene>
    <name evidence="1" type="primary">metK</name>
    <name type="ordered locus">Ava_0780</name>
</gene>
<name>METK_TRIV2</name>
<comment type="function">
    <text evidence="1">Catalyzes the formation of S-adenosylmethionine (AdoMet) from methionine and ATP. The overall synthetic reaction is composed of two sequential steps, AdoMet formation and the subsequent tripolyphosphate hydrolysis which occurs prior to release of AdoMet from the enzyme.</text>
</comment>
<comment type="catalytic activity">
    <reaction evidence="1">
        <text>L-methionine + ATP + H2O = S-adenosyl-L-methionine + phosphate + diphosphate</text>
        <dbReference type="Rhea" id="RHEA:21080"/>
        <dbReference type="ChEBI" id="CHEBI:15377"/>
        <dbReference type="ChEBI" id="CHEBI:30616"/>
        <dbReference type="ChEBI" id="CHEBI:33019"/>
        <dbReference type="ChEBI" id="CHEBI:43474"/>
        <dbReference type="ChEBI" id="CHEBI:57844"/>
        <dbReference type="ChEBI" id="CHEBI:59789"/>
        <dbReference type="EC" id="2.5.1.6"/>
    </reaction>
</comment>
<comment type="cofactor">
    <cofactor evidence="1">
        <name>Mg(2+)</name>
        <dbReference type="ChEBI" id="CHEBI:18420"/>
    </cofactor>
    <text evidence="1">Binds 2 divalent ions per subunit.</text>
</comment>
<comment type="cofactor">
    <cofactor evidence="1">
        <name>K(+)</name>
        <dbReference type="ChEBI" id="CHEBI:29103"/>
    </cofactor>
    <text evidence="1">Binds 1 potassium ion per subunit.</text>
</comment>
<comment type="pathway">
    <text evidence="1">Amino-acid biosynthesis; S-adenosyl-L-methionine biosynthesis; S-adenosyl-L-methionine from L-methionine: step 1/1.</text>
</comment>
<comment type="subunit">
    <text evidence="1">Homotetramer; dimer of dimers.</text>
</comment>
<comment type="subcellular location">
    <subcellularLocation>
        <location evidence="1">Cytoplasm</location>
    </subcellularLocation>
</comment>
<comment type="similarity">
    <text evidence="1">Belongs to the AdoMet synthase family.</text>
</comment>
<organism>
    <name type="scientific">Trichormus variabilis (strain ATCC 29413 / PCC 7937)</name>
    <name type="common">Anabaena variabilis</name>
    <dbReference type="NCBI Taxonomy" id="240292"/>
    <lineage>
        <taxon>Bacteria</taxon>
        <taxon>Bacillati</taxon>
        <taxon>Cyanobacteriota</taxon>
        <taxon>Cyanophyceae</taxon>
        <taxon>Nostocales</taxon>
        <taxon>Nostocaceae</taxon>
        <taxon>Trichormus</taxon>
    </lineage>
</organism>
<sequence>MSRRYLFTSESVTEGHPDKICDQISDTILDTLLTQDPTSRVAAEVVVNTGLVLITGEITTKANVNYANIARQKIAEIGYTNADNGFSASSTSVIVALDEQSPDIAQGVNTAQETREQDSEELFDKIGAGDQGIMFGFACNETPELMPLPICLAHRIARRLAAVRKTGELSYLRPDGKTQVTVVYEDGRPVGIDTVLISTQHTATIGDITDEAAVQAKIKQDLWTAVVEPVFGDLEIKPDQETRFLVNPTGKFVIGGPQGDSGLTGRKIIVDTYGGYSRHGGGAFSGKDPTKVDRSAAYAARYVAKNIVAAGLAEKCEVQLSYAIGVARPVSIFLDTFGTGKVDDEILLGLVKDNFELRPAGIIHSFNLRNLPSERGGRFYQDVAAYGHLGRNDLDLPWERTDKADFLKQAVTHSLSAAIA</sequence>
<keyword id="KW-0067">ATP-binding</keyword>
<keyword id="KW-0963">Cytoplasm</keyword>
<keyword id="KW-0460">Magnesium</keyword>
<keyword id="KW-0479">Metal-binding</keyword>
<keyword id="KW-0547">Nucleotide-binding</keyword>
<keyword id="KW-0554">One-carbon metabolism</keyword>
<keyword id="KW-0630">Potassium</keyword>
<keyword id="KW-0808">Transferase</keyword>
<accession>Q3MF32</accession>
<feature type="chain" id="PRO_0000240979" description="S-adenosylmethionine synthase">
    <location>
        <begin position="1"/>
        <end position="420"/>
    </location>
</feature>
<feature type="region of interest" description="Flexible loop" evidence="1">
    <location>
        <begin position="100"/>
        <end position="110"/>
    </location>
</feature>
<feature type="binding site" description="in other chain" evidence="1">
    <location>
        <position position="16"/>
    </location>
    <ligand>
        <name>ATP</name>
        <dbReference type="ChEBI" id="CHEBI:30616"/>
        <note>ligand shared between two neighboring subunits</note>
    </ligand>
</feature>
<feature type="binding site" evidence="1">
    <location>
        <position position="18"/>
    </location>
    <ligand>
        <name>Mg(2+)</name>
        <dbReference type="ChEBI" id="CHEBI:18420"/>
    </ligand>
</feature>
<feature type="binding site" evidence="1">
    <location>
        <position position="44"/>
    </location>
    <ligand>
        <name>K(+)</name>
        <dbReference type="ChEBI" id="CHEBI:29103"/>
    </ligand>
</feature>
<feature type="binding site" description="in other chain" evidence="1">
    <location>
        <position position="57"/>
    </location>
    <ligand>
        <name>L-methionine</name>
        <dbReference type="ChEBI" id="CHEBI:57844"/>
        <note>ligand shared between two neighboring subunits</note>
    </ligand>
</feature>
<feature type="binding site" description="in other chain" evidence="1">
    <location>
        <position position="100"/>
    </location>
    <ligand>
        <name>L-methionine</name>
        <dbReference type="ChEBI" id="CHEBI:57844"/>
        <note>ligand shared between two neighboring subunits</note>
    </ligand>
</feature>
<feature type="binding site" description="in other chain" evidence="1">
    <location>
        <begin position="175"/>
        <end position="177"/>
    </location>
    <ligand>
        <name>ATP</name>
        <dbReference type="ChEBI" id="CHEBI:30616"/>
        <note>ligand shared between two neighboring subunits</note>
    </ligand>
</feature>
<feature type="binding site" description="in other chain" evidence="1">
    <location>
        <begin position="251"/>
        <end position="252"/>
    </location>
    <ligand>
        <name>ATP</name>
        <dbReference type="ChEBI" id="CHEBI:30616"/>
        <note>ligand shared between two neighboring subunits</note>
    </ligand>
</feature>
<feature type="binding site" evidence="1">
    <location>
        <position position="260"/>
    </location>
    <ligand>
        <name>ATP</name>
        <dbReference type="ChEBI" id="CHEBI:30616"/>
        <note>ligand shared between two neighboring subunits</note>
    </ligand>
</feature>
<feature type="binding site" evidence="1">
    <location>
        <position position="260"/>
    </location>
    <ligand>
        <name>L-methionine</name>
        <dbReference type="ChEBI" id="CHEBI:57844"/>
        <note>ligand shared between two neighboring subunits</note>
    </ligand>
</feature>
<feature type="binding site" description="in other chain" evidence="1">
    <location>
        <begin position="266"/>
        <end position="267"/>
    </location>
    <ligand>
        <name>ATP</name>
        <dbReference type="ChEBI" id="CHEBI:30616"/>
        <note>ligand shared between two neighboring subunits</note>
    </ligand>
</feature>
<feature type="binding site" evidence="1">
    <location>
        <position position="283"/>
    </location>
    <ligand>
        <name>ATP</name>
        <dbReference type="ChEBI" id="CHEBI:30616"/>
        <note>ligand shared between two neighboring subunits</note>
    </ligand>
</feature>
<feature type="binding site" evidence="1">
    <location>
        <position position="287"/>
    </location>
    <ligand>
        <name>ATP</name>
        <dbReference type="ChEBI" id="CHEBI:30616"/>
        <note>ligand shared between two neighboring subunits</note>
    </ligand>
</feature>
<feature type="binding site" description="in other chain" evidence="1">
    <location>
        <position position="291"/>
    </location>
    <ligand>
        <name>L-methionine</name>
        <dbReference type="ChEBI" id="CHEBI:57844"/>
        <note>ligand shared between two neighboring subunits</note>
    </ligand>
</feature>
<evidence type="ECO:0000255" key="1">
    <source>
        <dbReference type="HAMAP-Rule" id="MF_00086"/>
    </source>
</evidence>
<protein>
    <recommendedName>
        <fullName evidence="1">S-adenosylmethionine synthase</fullName>
        <shortName evidence="1">AdoMet synthase</shortName>
        <ecNumber evidence="1">2.5.1.6</ecNumber>
    </recommendedName>
    <alternativeName>
        <fullName evidence="1">MAT</fullName>
    </alternativeName>
    <alternativeName>
        <fullName evidence="1">Methionine adenosyltransferase</fullName>
    </alternativeName>
</protein>
<dbReference type="EC" id="2.5.1.6" evidence="1"/>
<dbReference type="EMBL" id="CP000117">
    <property type="protein sequence ID" value="ABA20404.1"/>
    <property type="molecule type" value="Genomic_DNA"/>
</dbReference>
<dbReference type="SMR" id="Q3MF32"/>
<dbReference type="STRING" id="240292.Ava_0780"/>
<dbReference type="KEGG" id="ava:Ava_0780"/>
<dbReference type="eggNOG" id="COG0192">
    <property type="taxonomic scope" value="Bacteria"/>
</dbReference>
<dbReference type="HOGENOM" id="CLU_041802_1_1_3"/>
<dbReference type="UniPathway" id="UPA00315">
    <property type="reaction ID" value="UER00080"/>
</dbReference>
<dbReference type="Proteomes" id="UP000002533">
    <property type="component" value="Chromosome"/>
</dbReference>
<dbReference type="GO" id="GO:0005737">
    <property type="term" value="C:cytoplasm"/>
    <property type="evidence" value="ECO:0007669"/>
    <property type="project" value="UniProtKB-SubCell"/>
</dbReference>
<dbReference type="GO" id="GO:0005524">
    <property type="term" value="F:ATP binding"/>
    <property type="evidence" value="ECO:0007669"/>
    <property type="project" value="UniProtKB-UniRule"/>
</dbReference>
<dbReference type="GO" id="GO:0000287">
    <property type="term" value="F:magnesium ion binding"/>
    <property type="evidence" value="ECO:0007669"/>
    <property type="project" value="UniProtKB-UniRule"/>
</dbReference>
<dbReference type="GO" id="GO:0004478">
    <property type="term" value="F:methionine adenosyltransferase activity"/>
    <property type="evidence" value="ECO:0007669"/>
    <property type="project" value="UniProtKB-UniRule"/>
</dbReference>
<dbReference type="GO" id="GO:0006730">
    <property type="term" value="P:one-carbon metabolic process"/>
    <property type="evidence" value="ECO:0007669"/>
    <property type="project" value="UniProtKB-KW"/>
</dbReference>
<dbReference type="GO" id="GO:0006556">
    <property type="term" value="P:S-adenosylmethionine biosynthetic process"/>
    <property type="evidence" value="ECO:0007669"/>
    <property type="project" value="UniProtKB-UniRule"/>
</dbReference>
<dbReference type="CDD" id="cd18079">
    <property type="entry name" value="S-AdoMet_synt"/>
    <property type="match status" value="1"/>
</dbReference>
<dbReference type="FunFam" id="3.30.300.10:FF:000003">
    <property type="entry name" value="S-adenosylmethionine synthase"/>
    <property type="match status" value="1"/>
</dbReference>
<dbReference type="Gene3D" id="3.30.300.10">
    <property type="match status" value="3"/>
</dbReference>
<dbReference type="HAMAP" id="MF_00086">
    <property type="entry name" value="S_AdoMet_synth1"/>
    <property type="match status" value="1"/>
</dbReference>
<dbReference type="InterPro" id="IPR022631">
    <property type="entry name" value="ADOMET_SYNTHASE_CS"/>
</dbReference>
<dbReference type="InterPro" id="IPR022630">
    <property type="entry name" value="S-AdoMet_synt_C"/>
</dbReference>
<dbReference type="InterPro" id="IPR022629">
    <property type="entry name" value="S-AdoMet_synt_central"/>
</dbReference>
<dbReference type="InterPro" id="IPR022628">
    <property type="entry name" value="S-AdoMet_synt_N"/>
</dbReference>
<dbReference type="InterPro" id="IPR002133">
    <property type="entry name" value="S-AdoMet_synthetase"/>
</dbReference>
<dbReference type="InterPro" id="IPR022636">
    <property type="entry name" value="S-AdoMet_synthetase_sfam"/>
</dbReference>
<dbReference type="NCBIfam" id="TIGR01034">
    <property type="entry name" value="metK"/>
    <property type="match status" value="1"/>
</dbReference>
<dbReference type="PANTHER" id="PTHR11964">
    <property type="entry name" value="S-ADENOSYLMETHIONINE SYNTHETASE"/>
    <property type="match status" value="1"/>
</dbReference>
<dbReference type="Pfam" id="PF02773">
    <property type="entry name" value="S-AdoMet_synt_C"/>
    <property type="match status" value="1"/>
</dbReference>
<dbReference type="Pfam" id="PF02772">
    <property type="entry name" value="S-AdoMet_synt_M"/>
    <property type="match status" value="1"/>
</dbReference>
<dbReference type="Pfam" id="PF00438">
    <property type="entry name" value="S-AdoMet_synt_N"/>
    <property type="match status" value="1"/>
</dbReference>
<dbReference type="PIRSF" id="PIRSF000497">
    <property type="entry name" value="MAT"/>
    <property type="match status" value="1"/>
</dbReference>
<dbReference type="SUPFAM" id="SSF55973">
    <property type="entry name" value="S-adenosylmethionine synthetase"/>
    <property type="match status" value="3"/>
</dbReference>
<dbReference type="PROSITE" id="PS00376">
    <property type="entry name" value="ADOMET_SYNTHASE_1"/>
    <property type="match status" value="1"/>
</dbReference>
<dbReference type="PROSITE" id="PS00377">
    <property type="entry name" value="ADOMET_SYNTHASE_2"/>
    <property type="match status" value="1"/>
</dbReference>